<accession>P58274</accession>
<comment type="function">
    <text evidence="1">ATP-dependent serine protease that mediates the selective degradation of mutant and abnormal proteins as well as certain short-lived regulatory proteins. Degrades polypeptides processively (By similarity).</text>
</comment>
<comment type="subunit">
    <text evidence="1">Homohexamer. Organized in a ring with a central cavity (By similarity).</text>
</comment>
<comment type="subcellular location">
    <subcellularLocation>
        <location evidence="1">Cell membrane</location>
        <topology evidence="4">Multi-pass membrane protein</topology>
    </subcellularLocation>
</comment>
<comment type="similarity">
    <text evidence="4">Belongs to the peptidase S16 family. Archaeal LonB subfamily.</text>
</comment>
<proteinExistence type="inferred from homology"/>
<gene>
    <name type="ordered locus">TV0493</name>
    <name type="ORF">TVG0479569</name>
</gene>
<name>LONB_THEVO</name>
<reference key="1">
    <citation type="journal article" date="2000" name="Proc. Natl. Acad. Sci. U.S.A.">
        <title>Archaeal adaptation to higher temperatures revealed by genomic sequence of Thermoplasma volcanium.</title>
        <authorList>
            <person name="Kawashima T."/>
            <person name="Amano N."/>
            <person name="Koike H."/>
            <person name="Makino S."/>
            <person name="Higuchi S."/>
            <person name="Kawashima-Ohya Y."/>
            <person name="Watanabe K."/>
            <person name="Yamazaki M."/>
            <person name="Kanehori K."/>
            <person name="Kawamoto T."/>
            <person name="Nunoshiba T."/>
            <person name="Yamamoto Y."/>
            <person name="Aramaki H."/>
            <person name="Makino K."/>
            <person name="Suzuki M."/>
        </authorList>
    </citation>
    <scope>NUCLEOTIDE SEQUENCE [LARGE SCALE GENOMIC DNA]</scope>
    <source>
        <strain>ATCC 51530 / DSM 4299 / JCM 9571 / NBRC 15438 / GSS1</strain>
    </source>
</reference>
<protein>
    <recommendedName>
        <fullName>Archaeal Lon protease</fullName>
        <ecNumber>3.4.21.-</ecNumber>
    </recommendedName>
    <alternativeName>
        <fullName>ATP-dependent protease La homolog type 1</fullName>
    </alternativeName>
</protein>
<feature type="chain" id="PRO_0000076155" description="Archaeal Lon protease">
    <location>
        <begin position="1"/>
        <end position="655"/>
    </location>
</feature>
<feature type="topological domain" description="Cytoplasmic" evidence="2">
    <location>
        <begin position="1"/>
        <end position="123"/>
    </location>
</feature>
<feature type="transmembrane region" description="Helical" evidence="2">
    <location>
        <begin position="124"/>
        <end position="144"/>
    </location>
</feature>
<feature type="topological domain" description="Extracellular" evidence="2">
    <location>
        <position position="145"/>
    </location>
</feature>
<feature type="transmembrane region" description="Helical" evidence="2">
    <location>
        <begin position="146"/>
        <end position="166"/>
    </location>
</feature>
<feature type="topological domain" description="Cytoplasmic" evidence="2">
    <location>
        <begin position="167"/>
        <end position="655"/>
    </location>
</feature>
<feature type="domain" description="Lon proteolytic" evidence="3">
    <location>
        <begin position="433"/>
        <end position="618"/>
    </location>
</feature>
<feature type="active site" evidence="1">
    <location>
        <position position="525"/>
    </location>
</feature>
<feature type="active site" evidence="1">
    <location>
        <position position="568"/>
    </location>
</feature>
<feature type="binding site" evidence="2">
    <location>
        <begin position="57"/>
        <end position="64"/>
    </location>
    <ligand>
        <name>ATP</name>
        <dbReference type="ChEBI" id="CHEBI:30616"/>
    </ligand>
</feature>
<keyword id="KW-0067">ATP-binding</keyword>
<keyword id="KW-1003">Cell membrane</keyword>
<keyword id="KW-0378">Hydrolase</keyword>
<keyword id="KW-0472">Membrane</keyword>
<keyword id="KW-0547">Nucleotide-binding</keyword>
<keyword id="KW-0645">Protease</keyword>
<keyword id="KW-0720">Serine protease</keyword>
<keyword id="KW-0812">Transmembrane</keyword>
<keyword id="KW-1133">Transmembrane helix</keyword>
<sequence>MEENIESVEEWVSKLDIETTKDIHVPKLLFDQVIGQDQAGEIVKKAALQRRHVILIGEPGTGKSMLAQSMVDFLPKSELEDILVFPNPEDPNKPKIKTVPAGKGKEIVRQYQIKAEREKRDRSRSIMFVIFSVVLLGIIAAIVLRSITLIFFAIMAAAFLYMAMAFNPVIRNEKAMVPKLLVSHSSTDKPPFVDSTGAHSGALLGDVRHDPFQSGGLETPAHERVEAGNIHKAHKGVLFIDEINLLRPEDQQAILTALQEKKYPISGQSERSAGAMVQTEPVPCDFVLVAAGNYDAIRNMHPALRSRIRGYGYEVVVNDYMDDNDENRKKLVQFIAQEVEKDKKIPHFDKSAIVEIIKEAQKRSGRRNKLTLRLRELGGLVRVAGDIAVSQKRNIVTASDVIAAKALSKPLEQQIADKSIEIKKIYKTFRTEGSVVGMVNGLAVVGADTGMAEYTGVVLPIVAEVTPAEHKGAGNIIATGKLGDIAKEAVLNVSAVFKKITGKDISNMDIHIQFVGTYEGVEGDSASVSIATAVISAIENIPVDQSVAMTGSLSVRGDVLPVGGVTAKVEAAIEAGMAKVIVPELNYNDIILDAEHINRIQIIPARTIEDVLKVALVNSPEKDKLFDRIASIINNAKIIKPQKPVASTRAGQNVA</sequence>
<organism>
    <name type="scientific">Thermoplasma volcanium (strain ATCC 51530 / DSM 4299 / JCM 9571 / NBRC 15438 / GSS1)</name>
    <dbReference type="NCBI Taxonomy" id="273116"/>
    <lineage>
        <taxon>Archaea</taxon>
        <taxon>Methanobacteriati</taxon>
        <taxon>Thermoplasmatota</taxon>
        <taxon>Thermoplasmata</taxon>
        <taxon>Thermoplasmatales</taxon>
        <taxon>Thermoplasmataceae</taxon>
        <taxon>Thermoplasma</taxon>
    </lineage>
</organism>
<evidence type="ECO:0000250" key="1"/>
<evidence type="ECO:0000255" key="2"/>
<evidence type="ECO:0000255" key="3">
    <source>
        <dbReference type="PROSITE-ProRule" id="PRU01122"/>
    </source>
</evidence>
<evidence type="ECO:0000305" key="4"/>
<dbReference type="EC" id="3.4.21.-"/>
<dbReference type="EMBL" id="BA000011">
    <property type="protein sequence ID" value="BAB59635.1"/>
    <property type="molecule type" value="Genomic_DNA"/>
</dbReference>
<dbReference type="RefSeq" id="WP_010916752.1">
    <property type="nucleotide sequence ID" value="NC_002689.2"/>
</dbReference>
<dbReference type="SMR" id="P58274"/>
<dbReference type="STRING" id="273116.gene:9381275"/>
<dbReference type="MEROPS" id="S16.A11"/>
<dbReference type="PaxDb" id="273116-14324708"/>
<dbReference type="GeneID" id="1441010"/>
<dbReference type="KEGG" id="tvo:TVG0479569"/>
<dbReference type="eggNOG" id="arCOG02160">
    <property type="taxonomic scope" value="Archaea"/>
</dbReference>
<dbReference type="HOGENOM" id="CLU_392630_0_0_2"/>
<dbReference type="OrthoDB" id="64652at2157"/>
<dbReference type="PhylomeDB" id="P58274"/>
<dbReference type="Proteomes" id="UP000001017">
    <property type="component" value="Chromosome"/>
</dbReference>
<dbReference type="GO" id="GO:0005886">
    <property type="term" value="C:plasma membrane"/>
    <property type="evidence" value="ECO:0007669"/>
    <property type="project" value="UniProtKB-SubCell"/>
</dbReference>
<dbReference type="GO" id="GO:0005524">
    <property type="term" value="F:ATP binding"/>
    <property type="evidence" value="ECO:0007669"/>
    <property type="project" value="UniProtKB-KW"/>
</dbReference>
<dbReference type="GO" id="GO:0016887">
    <property type="term" value="F:ATP hydrolysis activity"/>
    <property type="evidence" value="ECO:0007669"/>
    <property type="project" value="InterPro"/>
</dbReference>
<dbReference type="GO" id="GO:0004176">
    <property type="term" value="F:ATP-dependent peptidase activity"/>
    <property type="evidence" value="ECO:0007669"/>
    <property type="project" value="InterPro"/>
</dbReference>
<dbReference type="GO" id="GO:0004252">
    <property type="term" value="F:serine-type endopeptidase activity"/>
    <property type="evidence" value="ECO:0007669"/>
    <property type="project" value="InterPro"/>
</dbReference>
<dbReference type="GO" id="GO:0030163">
    <property type="term" value="P:protein catabolic process"/>
    <property type="evidence" value="ECO:0007669"/>
    <property type="project" value="InterPro"/>
</dbReference>
<dbReference type="GO" id="GO:0006508">
    <property type="term" value="P:proteolysis"/>
    <property type="evidence" value="ECO:0007669"/>
    <property type="project" value="UniProtKB-KW"/>
</dbReference>
<dbReference type="GO" id="GO:0006355">
    <property type="term" value="P:regulation of DNA-templated transcription"/>
    <property type="evidence" value="ECO:0007669"/>
    <property type="project" value="InterPro"/>
</dbReference>
<dbReference type="Gene3D" id="1.10.8.60">
    <property type="match status" value="1"/>
</dbReference>
<dbReference type="Gene3D" id="3.30.230.10">
    <property type="match status" value="1"/>
</dbReference>
<dbReference type="Gene3D" id="3.40.50.300">
    <property type="entry name" value="P-loop containing nucleotide triphosphate hydrolases"/>
    <property type="match status" value="2"/>
</dbReference>
<dbReference type="InterPro" id="IPR003593">
    <property type="entry name" value="AAA+_ATPase"/>
</dbReference>
<dbReference type="InterPro" id="IPR004663">
    <property type="entry name" value="Lon_arc"/>
</dbReference>
<dbReference type="InterPro" id="IPR008269">
    <property type="entry name" value="Lon_proteolytic"/>
</dbReference>
<dbReference type="InterPro" id="IPR027065">
    <property type="entry name" value="Lon_Prtase"/>
</dbReference>
<dbReference type="InterPro" id="IPR046843">
    <property type="entry name" value="LonB_AAA-LID"/>
</dbReference>
<dbReference type="InterPro" id="IPR000523">
    <property type="entry name" value="Mg_chelatse_chII-like_cat_dom"/>
</dbReference>
<dbReference type="InterPro" id="IPR027417">
    <property type="entry name" value="P-loop_NTPase"/>
</dbReference>
<dbReference type="InterPro" id="IPR020568">
    <property type="entry name" value="Ribosomal_Su5_D2-typ_SF"/>
</dbReference>
<dbReference type="InterPro" id="IPR014721">
    <property type="entry name" value="Ribsml_uS5_D2-typ_fold_subgr"/>
</dbReference>
<dbReference type="InterPro" id="IPR002078">
    <property type="entry name" value="Sigma_54_int"/>
</dbReference>
<dbReference type="NCBIfam" id="TIGR00764">
    <property type="entry name" value="lon_rel"/>
    <property type="match status" value="1"/>
</dbReference>
<dbReference type="PANTHER" id="PTHR10046">
    <property type="entry name" value="ATP DEPENDENT LON PROTEASE FAMILY MEMBER"/>
    <property type="match status" value="1"/>
</dbReference>
<dbReference type="Pfam" id="PF05362">
    <property type="entry name" value="Lon_C"/>
    <property type="match status" value="1"/>
</dbReference>
<dbReference type="Pfam" id="PF20436">
    <property type="entry name" value="LonB_AAA-LID"/>
    <property type="match status" value="1"/>
</dbReference>
<dbReference type="Pfam" id="PF01078">
    <property type="entry name" value="Mg_chelatase"/>
    <property type="match status" value="1"/>
</dbReference>
<dbReference type="Pfam" id="PF00158">
    <property type="entry name" value="Sigma54_activat"/>
    <property type="match status" value="1"/>
</dbReference>
<dbReference type="PRINTS" id="PR00830">
    <property type="entry name" value="ENDOLAPTASE"/>
</dbReference>
<dbReference type="SMART" id="SM00382">
    <property type="entry name" value="AAA"/>
    <property type="match status" value="1"/>
</dbReference>
<dbReference type="SUPFAM" id="SSF52540">
    <property type="entry name" value="P-loop containing nucleoside triphosphate hydrolases"/>
    <property type="match status" value="1"/>
</dbReference>
<dbReference type="SUPFAM" id="SSF54211">
    <property type="entry name" value="Ribosomal protein S5 domain 2-like"/>
    <property type="match status" value="1"/>
</dbReference>
<dbReference type="PROSITE" id="PS51786">
    <property type="entry name" value="LON_PROTEOLYTIC"/>
    <property type="match status" value="1"/>
</dbReference>